<accession>Q2JSW2</accession>
<evidence type="ECO:0000255" key="1">
    <source>
        <dbReference type="HAMAP-Rule" id="MF_00815"/>
    </source>
</evidence>
<name>ATPG_SYNJA</name>
<dbReference type="EMBL" id="CP000239">
    <property type="protein sequence ID" value="ABD00252.1"/>
    <property type="molecule type" value="Genomic_DNA"/>
</dbReference>
<dbReference type="RefSeq" id="WP_011430926.1">
    <property type="nucleotide sequence ID" value="NC_007775.1"/>
</dbReference>
<dbReference type="SMR" id="Q2JSW2"/>
<dbReference type="STRING" id="321327.CYA_2112"/>
<dbReference type="KEGG" id="cya:CYA_2112"/>
<dbReference type="eggNOG" id="COG0224">
    <property type="taxonomic scope" value="Bacteria"/>
</dbReference>
<dbReference type="HOGENOM" id="CLU_050669_0_0_3"/>
<dbReference type="OrthoDB" id="9812769at2"/>
<dbReference type="Proteomes" id="UP000008818">
    <property type="component" value="Chromosome"/>
</dbReference>
<dbReference type="GO" id="GO:0031676">
    <property type="term" value="C:plasma membrane-derived thylakoid membrane"/>
    <property type="evidence" value="ECO:0007669"/>
    <property type="project" value="UniProtKB-SubCell"/>
</dbReference>
<dbReference type="GO" id="GO:0045259">
    <property type="term" value="C:proton-transporting ATP synthase complex"/>
    <property type="evidence" value="ECO:0007669"/>
    <property type="project" value="UniProtKB-KW"/>
</dbReference>
<dbReference type="GO" id="GO:0005524">
    <property type="term" value="F:ATP binding"/>
    <property type="evidence" value="ECO:0007669"/>
    <property type="project" value="UniProtKB-UniRule"/>
</dbReference>
<dbReference type="GO" id="GO:0046933">
    <property type="term" value="F:proton-transporting ATP synthase activity, rotational mechanism"/>
    <property type="evidence" value="ECO:0007669"/>
    <property type="project" value="UniProtKB-UniRule"/>
</dbReference>
<dbReference type="CDD" id="cd12151">
    <property type="entry name" value="F1-ATPase_gamma"/>
    <property type="match status" value="1"/>
</dbReference>
<dbReference type="FunFam" id="3.40.1380.10:FF:000006">
    <property type="entry name" value="ATP synthase gamma chain"/>
    <property type="match status" value="1"/>
</dbReference>
<dbReference type="FunFam" id="1.10.287.80:FF:000003">
    <property type="entry name" value="ATP synthase gamma chain, chloroplastic"/>
    <property type="match status" value="1"/>
</dbReference>
<dbReference type="FunFam" id="1.10.287.80:FF:000004">
    <property type="entry name" value="ATP synthase gamma chain, chloroplastic"/>
    <property type="match status" value="1"/>
</dbReference>
<dbReference type="Gene3D" id="3.40.1380.10">
    <property type="match status" value="1"/>
</dbReference>
<dbReference type="Gene3D" id="1.10.287.80">
    <property type="entry name" value="ATP synthase, gamma subunit, helix hairpin domain"/>
    <property type="match status" value="2"/>
</dbReference>
<dbReference type="HAMAP" id="MF_00815">
    <property type="entry name" value="ATP_synth_gamma_bact"/>
    <property type="match status" value="1"/>
</dbReference>
<dbReference type="InterPro" id="IPR035968">
    <property type="entry name" value="ATP_synth_F1_ATPase_gsu"/>
</dbReference>
<dbReference type="InterPro" id="IPR000131">
    <property type="entry name" value="ATP_synth_F1_gsu"/>
</dbReference>
<dbReference type="InterPro" id="IPR023632">
    <property type="entry name" value="ATP_synth_F1_gsu_CS"/>
</dbReference>
<dbReference type="NCBIfam" id="TIGR01146">
    <property type="entry name" value="ATPsyn_F1gamma"/>
    <property type="match status" value="1"/>
</dbReference>
<dbReference type="NCBIfam" id="NF004145">
    <property type="entry name" value="PRK05621.1-2"/>
    <property type="match status" value="1"/>
</dbReference>
<dbReference type="PANTHER" id="PTHR11693">
    <property type="entry name" value="ATP SYNTHASE GAMMA CHAIN"/>
    <property type="match status" value="1"/>
</dbReference>
<dbReference type="PANTHER" id="PTHR11693:SF41">
    <property type="entry name" value="ATP SYNTHASE GAMMA CHAIN, CHLOROPLASTIC"/>
    <property type="match status" value="1"/>
</dbReference>
<dbReference type="Pfam" id="PF00231">
    <property type="entry name" value="ATP-synt"/>
    <property type="match status" value="1"/>
</dbReference>
<dbReference type="PRINTS" id="PR00126">
    <property type="entry name" value="ATPASEGAMMA"/>
</dbReference>
<dbReference type="SUPFAM" id="SSF52943">
    <property type="entry name" value="ATP synthase (F1-ATPase), gamma subunit"/>
    <property type="match status" value="1"/>
</dbReference>
<dbReference type="PROSITE" id="PS00153">
    <property type="entry name" value="ATPASE_GAMMA"/>
    <property type="match status" value="1"/>
</dbReference>
<protein>
    <recommendedName>
        <fullName evidence="1">ATP synthase gamma chain</fullName>
    </recommendedName>
    <alternativeName>
        <fullName evidence="1">ATP synthase F1 sector gamma subunit</fullName>
    </alternativeName>
    <alternativeName>
        <fullName evidence="1">F-ATPase gamma subunit</fullName>
    </alternativeName>
</protein>
<comment type="function">
    <text evidence="1">Produces ATP from ADP in the presence of a proton gradient across the membrane. The gamma chain is believed to be important in regulating ATPase activity and the flow of protons through the CF(0) complex.</text>
</comment>
<comment type="subunit">
    <text evidence="1">F-type ATPases have 2 components, CF(1) - the catalytic core - and CF(0) - the membrane proton channel. CF(1) has five subunits: alpha(3), beta(3), gamma(1), delta(1), epsilon(1). CF(0) has three main subunits: a, b and c.</text>
</comment>
<comment type="subcellular location">
    <subcellularLocation>
        <location evidence="1">Cellular thylakoid membrane</location>
        <topology evidence="1">Peripheral membrane protein</topology>
    </subcellularLocation>
</comment>
<comment type="similarity">
    <text evidence="1">Belongs to the ATPase gamma chain family.</text>
</comment>
<feature type="chain" id="PRO_1000053361" description="ATP synthase gamma chain">
    <location>
        <begin position="1"/>
        <end position="314"/>
    </location>
</feature>
<gene>
    <name evidence="1" type="primary">atpG</name>
    <name evidence="1" type="synonym">atpC</name>
    <name type="ordered locus">CYA_2112</name>
</gene>
<keyword id="KW-0066">ATP synthesis</keyword>
<keyword id="KW-0139">CF(1)</keyword>
<keyword id="KW-0375">Hydrogen ion transport</keyword>
<keyword id="KW-0406">Ion transport</keyword>
<keyword id="KW-0472">Membrane</keyword>
<keyword id="KW-0793">Thylakoid</keyword>
<keyword id="KW-0813">Transport</keyword>
<organism>
    <name type="scientific">Synechococcus sp. (strain JA-3-3Ab)</name>
    <name type="common">Cyanobacteria bacterium Yellowstone A-Prime</name>
    <dbReference type="NCBI Taxonomy" id="321327"/>
    <lineage>
        <taxon>Bacteria</taxon>
        <taxon>Bacillati</taxon>
        <taxon>Cyanobacteriota</taxon>
        <taxon>Cyanophyceae</taxon>
        <taxon>Synechococcales</taxon>
        <taxon>Synechococcaceae</taxon>
        <taxon>Synechococcus</taxon>
    </lineage>
</organism>
<proteinExistence type="inferred from homology"/>
<reference key="1">
    <citation type="journal article" date="2007" name="ISME J.">
        <title>Population level functional diversity in a microbial community revealed by comparative genomic and metagenomic analyses.</title>
        <authorList>
            <person name="Bhaya D."/>
            <person name="Grossman A.R."/>
            <person name="Steunou A.-S."/>
            <person name="Khuri N."/>
            <person name="Cohan F.M."/>
            <person name="Hamamura N."/>
            <person name="Melendrez M.C."/>
            <person name="Bateson M.M."/>
            <person name="Ward D.M."/>
            <person name="Heidelberg J.F."/>
        </authorList>
    </citation>
    <scope>NUCLEOTIDE SEQUENCE [LARGE SCALE GENOMIC DNA]</scope>
    <source>
        <strain>JA-3-3Ab</strain>
    </source>
</reference>
<sequence>MANLKRIRDRIKAVKNTRKITEAMRLVAAARVRRAQEQVMATRPFADRLAQVFYRLQTRLRLEDVDLPLLKQRPIETVGLLVVAGDRGLCGAYNANVIKRTEERVRELQETGQQVRLYLVGRKAVQYFQRRSAPIAKTYVNLSQIPTAAEAAQIGDELLSAFLSEKVDKVELIYTRFVSLISSRPVVQSLLPLDPTRLAARDDEIFNLLVRGGEFTVERSKIVAAVSAPPPDMIFEQDPVQILDALLPLYLNNQLLRALQEAAASELAARMTAMSNASDNATELIRTLGLAYNKARQAAITQEILEVVAGAEAL</sequence>